<proteinExistence type="inferred from homology"/>
<dbReference type="EC" id="4.2.3.5" evidence="1"/>
<dbReference type="EMBL" id="CP000742">
    <property type="protein sequence ID" value="ABR54550.1"/>
    <property type="molecule type" value="Genomic_DNA"/>
</dbReference>
<dbReference type="SMR" id="A6UPX8"/>
<dbReference type="STRING" id="406327.Mevan_0644"/>
<dbReference type="KEGG" id="mvn:Mevan_0644"/>
<dbReference type="eggNOG" id="arCOG04133">
    <property type="taxonomic scope" value="Archaea"/>
</dbReference>
<dbReference type="HOGENOM" id="CLU_034547_0_2_2"/>
<dbReference type="UniPathway" id="UPA00053">
    <property type="reaction ID" value="UER00090"/>
</dbReference>
<dbReference type="Proteomes" id="UP000001107">
    <property type="component" value="Chromosome"/>
</dbReference>
<dbReference type="GO" id="GO:0005829">
    <property type="term" value="C:cytosol"/>
    <property type="evidence" value="ECO:0007669"/>
    <property type="project" value="TreeGrafter"/>
</dbReference>
<dbReference type="GO" id="GO:0004107">
    <property type="term" value="F:chorismate synthase activity"/>
    <property type="evidence" value="ECO:0007669"/>
    <property type="project" value="UniProtKB-UniRule"/>
</dbReference>
<dbReference type="GO" id="GO:0010181">
    <property type="term" value="F:FMN binding"/>
    <property type="evidence" value="ECO:0007669"/>
    <property type="project" value="TreeGrafter"/>
</dbReference>
<dbReference type="GO" id="GO:0008652">
    <property type="term" value="P:amino acid biosynthetic process"/>
    <property type="evidence" value="ECO:0007669"/>
    <property type="project" value="UniProtKB-KW"/>
</dbReference>
<dbReference type="GO" id="GO:0009073">
    <property type="term" value="P:aromatic amino acid family biosynthetic process"/>
    <property type="evidence" value="ECO:0007669"/>
    <property type="project" value="UniProtKB-KW"/>
</dbReference>
<dbReference type="GO" id="GO:0009423">
    <property type="term" value="P:chorismate biosynthetic process"/>
    <property type="evidence" value="ECO:0007669"/>
    <property type="project" value="UniProtKB-UniRule"/>
</dbReference>
<dbReference type="CDD" id="cd07304">
    <property type="entry name" value="Chorismate_synthase"/>
    <property type="match status" value="1"/>
</dbReference>
<dbReference type="Gene3D" id="3.60.150.10">
    <property type="entry name" value="Chorismate synthase AroC"/>
    <property type="match status" value="1"/>
</dbReference>
<dbReference type="HAMAP" id="MF_00300">
    <property type="entry name" value="Chorismate_synth"/>
    <property type="match status" value="1"/>
</dbReference>
<dbReference type="InterPro" id="IPR000453">
    <property type="entry name" value="Chorismate_synth"/>
</dbReference>
<dbReference type="InterPro" id="IPR035904">
    <property type="entry name" value="Chorismate_synth_AroC_sf"/>
</dbReference>
<dbReference type="InterPro" id="IPR020541">
    <property type="entry name" value="Chorismate_synthase_CS"/>
</dbReference>
<dbReference type="NCBIfam" id="TIGR00033">
    <property type="entry name" value="aroC"/>
    <property type="match status" value="1"/>
</dbReference>
<dbReference type="NCBIfam" id="NF003793">
    <property type="entry name" value="PRK05382.1"/>
    <property type="match status" value="1"/>
</dbReference>
<dbReference type="PANTHER" id="PTHR21085">
    <property type="entry name" value="CHORISMATE SYNTHASE"/>
    <property type="match status" value="1"/>
</dbReference>
<dbReference type="PANTHER" id="PTHR21085:SF0">
    <property type="entry name" value="CHORISMATE SYNTHASE"/>
    <property type="match status" value="1"/>
</dbReference>
<dbReference type="Pfam" id="PF01264">
    <property type="entry name" value="Chorismate_synt"/>
    <property type="match status" value="1"/>
</dbReference>
<dbReference type="PIRSF" id="PIRSF001456">
    <property type="entry name" value="Chorismate_synth"/>
    <property type="match status" value="1"/>
</dbReference>
<dbReference type="SUPFAM" id="SSF103263">
    <property type="entry name" value="Chorismate synthase, AroC"/>
    <property type="match status" value="1"/>
</dbReference>
<dbReference type="PROSITE" id="PS00787">
    <property type="entry name" value="CHORISMATE_SYNTHASE_1"/>
    <property type="match status" value="1"/>
</dbReference>
<dbReference type="PROSITE" id="PS00788">
    <property type="entry name" value="CHORISMATE_SYNTHASE_2"/>
    <property type="match status" value="1"/>
</dbReference>
<feature type="chain" id="PRO_1000022515" description="Chorismate synthase">
    <location>
        <begin position="1"/>
        <end position="377"/>
    </location>
</feature>
<feature type="binding site" evidence="1">
    <location>
        <position position="47"/>
    </location>
    <ligand>
        <name>NADP(+)</name>
        <dbReference type="ChEBI" id="CHEBI:58349"/>
    </ligand>
</feature>
<feature type="binding site" evidence="1">
    <location>
        <begin position="124"/>
        <end position="126"/>
    </location>
    <ligand>
        <name>FMN</name>
        <dbReference type="ChEBI" id="CHEBI:58210"/>
    </ligand>
</feature>
<feature type="binding site" evidence="1">
    <location>
        <begin position="252"/>
        <end position="253"/>
    </location>
    <ligand>
        <name>FMN</name>
        <dbReference type="ChEBI" id="CHEBI:58210"/>
    </ligand>
</feature>
<feature type="binding site" evidence="1">
    <location>
        <position position="296"/>
    </location>
    <ligand>
        <name>FMN</name>
        <dbReference type="ChEBI" id="CHEBI:58210"/>
    </ligand>
</feature>
<feature type="binding site" evidence="1">
    <location>
        <begin position="311"/>
        <end position="315"/>
    </location>
    <ligand>
        <name>FMN</name>
        <dbReference type="ChEBI" id="CHEBI:58210"/>
    </ligand>
</feature>
<feature type="binding site" evidence="1">
    <location>
        <position position="338"/>
    </location>
    <ligand>
        <name>FMN</name>
        <dbReference type="ChEBI" id="CHEBI:58210"/>
    </ligand>
</feature>
<organism>
    <name type="scientific">Methanococcus vannielii (strain ATCC 35089 / DSM 1224 / JCM 13029 / OCM 148 / SB)</name>
    <dbReference type="NCBI Taxonomy" id="406327"/>
    <lineage>
        <taxon>Archaea</taxon>
        <taxon>Methanobacteriati</taxon>
        <taxon>Methanobacteriota</taxon>
        <taxon>Methanomada group</taxon>
        <taxon>Methanococci</taxon>
        <taxon>Methanococcales</taxon>
        <taxon>Methanococcaceae</taxon>
        <taxon>Methanococcus</taxon>
    </lineage>
</organism>
<gene>
    <name evidence="1" type="primary">aroC</name>
    <name type="ordered locus">Mevan_0644</name>
</gene>
<comment type="function">
    <text evidence="1">Catalyzes the anti-1,4-elimination of the C-3 phosphate and the C-6 proR hydrogen from 5-enolpyruvylshikimate-3-phosphate (EPSP) to yield chorismate, which is the branch point compound that serves as the starting substrate for the three terminal pathways of aromatic amino acid biosynthesis. This reaction introduces a second double bond into the aromatic ring system.</text>
</comment>
<comment type="catalytic activity">
    <reaction evidence="1">
        <text>5-O-(1-carboxyvinyl)-3-phosphoshikimate = chorismate + phosphate</text>
        <dbReference type="Rhea" id="RHEA:21020"/>
        <dbReference type="ChEBI" id="CHEBI:29748"/>
        <dbReference type="ChEBI" id="CHEBI:43474"/>
        <dbReference type="ChEBI" id="CHEBI:57701"/>
        <dbReference type="EC" id="4.2.3.5"/>
    </reaction>
</comment>
<comment type="cofactor">
    <cofactor evidence="1">
        <name>FMNH2</name>
        <dbReference type="ChEBI" id="CHEBI:57618"/>
    </cofactor>
    <text evidence="1">Reduced FMN (FMNH(2)).</text>
</comment>
<comment type="pathway">
    <text evidence="1">Metabolic intermediate biosynthesis; chorismate biosynthesis; chorismate from D-erythrose 4-phosphate and phosphoenolpyruvate: step 7/7.</text>
</comment>
<comment type="similarity">
    <text evidence="1">Belongs to the chorismate synthase family.</text>
</comment>
<protein>
    <recommendedName>
        <fullName evidence="1">Chorismate synthase</fullName>
        <shortName evidence="1">CS</shortName>
        <ecNumber evidence="1">4.2.3.5</ecNumber>
    </recommendedName>
    <alternativeName>
        <fullName evidence="1">5-enolpyruvylshikimate-3-phosphate phospholyase</fullName>
    </alternativeName>
</protein>
<sequence>MLNTFGDTFRVTTWGESHGKALGAVIDGCPSNLPLTENDIQYELNRRRPGYSLFSTPRKEEDEVEILSGIFEGKTTGTPISCIVYNKSQQSKDYTAIKDTPRPGHADLSYQLKYGNYDYRGGGRSSGRTTIGNVIGGAIAKKLIEYTHKIKVIGYTTEIGTIKGDFNYYNNPEFFESDLNIQKLSNQIEDSVLRCPSTNSNEMNEYVFKAIDGKDSVGGVVEVVIYGLPKGIGNPIFNKLEGRLSSAVMSINSIKGFEVGKGFESSRLFGSEMNDEFYFKNGIICPKTNNAGGILGGISTGAPVVIRASIKPTPSISKTQETVNIKTLETVPIKIGGRHDPIIVPRVIPVIESMVSITIADLMISSGFINPSKLSNI</sequence>
<keyword id="KW-0028">Amino-acid biosynthesis</keyword>
<keyword id="KW-0057">Aromatic amino acid biosynthesis</keyword>
<keyword id="KW-0274">FAD</keyword>
<keyword id="KW-0285">Flavoprotein</keyword>
<keyword id="KW-0288">FMN</keyword>
<keyword id="KW-0456">Lyase</keyword>
<keyword id="KW-0521">NADP</keyword>
<name>AROC_METVS</name>
<evidence type="ECO:0000255" key="1">
    <source>
        <dbReference type="HAMAP-Rule" id="MF_00300"/>
    </source>
</evidence>
<reference key="1">
    <citation type="submission" date="2007-06" db="EMBL/GenBank/DDBJ databases">
        <title>Complete sequence of Methanococcus vannielii SB.</title>
        <authorList>
            <consortium name="US DOE Joint Genome Institute"/>
            <person name="Copeland A."/>
            <person name="Lucas S."/>
            <person name="Lapidus A."/>
            <person name="Barry K."/>
            <person name="Glavina del Rio T."/>
            <person name="Dalin E."/>
            <person name="Tice H."/>
            <person name="Pitluck S."/>
            <person name="Chain P."/>
            <person name="Malfatti S."/>
            <person name="Shin M."/>
            <person name="Vergez L."/>
            <person name="Schmutz J."/>
            <person name="Larimer F."/>
            <person name="Land M."/>
            <person name="Hauser L."/>
            <person name="Kyrpides N."/>
            <person name="Anderson I."/>
            <person name="Sieprawska-Lupa M."/>
            <person name="Whitman W.B."/>
            <person name="Richardson P."/>
        </authorList>
    </citation>
    <scope>NUCLEOTIDE SEQUENCE [LARGE SCALE GENOMIC DNA]</scope>
    <source>
        <strain>ATCC 35089 / DSM 1224 / JCM 13029 / OCM 148 / SB</strain>
    </source>
</reference>
<accession>A6UPX8</accession>